<dbReference type="EMBL" id="L14812">
    <property type="protein sequence ID" value="AAA02489.1"/>
    <property type="molecule type" value="mRNA"/>
</dbReference>
<dbReference type="EMBL" id="AK290380">
    <property type="protein sequence ID" value="BAF83069.1"/>
    <property type="molecule type" value="mRNA"/>
</dbReference>
<dbReference type="EMBL" id="AL136172">
    <property type="status" value="NOT_ANNOTATED_CDS"/>
    <property type="molecule type" value="Genomic_DNA"/>
</dbReference>
<dbReference type="EMBL" id="AL365505">
    <property type="status" value="NOT_ANNOTATED_CDS"/>
    <property type="molecule type" value="Genomic_DNA"/>
</dbReference>
<dbReference type="EMBL" id="AL391114">
    <property type="status" value="NOT_ANNOTATED_CDS"/>
    <property type="molecule type" value="Genomic_DNA"/>
</dbReference>
<dbReference type="EMBL" id="CH471077">
    <property type="protein sequence ID" value="EAW76088.1"/>
    <property type="molecule type" value="Genomic_DNA"/>
</dbReference>
<dbReference type="EMBL" id="BC032247">
    <property type="protein sequence ID" value="AAH32247.1"/>
    <property type="molecule type" value="mRNA"/>
</dbReference>
<dbReference type="EMBL" id="M74547">
    <property type="protein sequence ID" value="AAA36397.1"/>
    <property type="molecule type" value="mRNA"/>
</dbReference>
<dbReference type="EMBL" id="S78664">
    <property type="protein sequence ID" value="AAD14290.1"/>
    <property type="molecule type" value="Genomic_DNA"/>
</dbReference>
<dbReference type="CCDS" id="CCDS13289.1">
    <molecule id="P28749-1"/>
</dbReference>
<dbReference type="CCDS" id="CCDS13290.1">
    <molecule id="P28749-2"/>
</dbReference>
<dbReference type="PIR" id="A47319">
    <property type="entry name" value="A40265"/>
</dbReference>
<dbReference type="RefSeq" id="NP_002886.2">
    <molecule id="P28749-1"/>
    <property type="nucleotide sequence ID" value="NM_002895.4"/>
</dbReference>
<dbReference type="RefSeq" id="NP_899662.1">
    <molecule id="P28749-2"/>
    <property type="nucleotide sequence ID" value="NM_183404.4"/>
</dbReference>
<dbReference type="PDB" id="1H28">
    <property type="method" value="X-ray"/>
    <property type="resolution" value="2.80 A"/>
    <property type="chains" value="E/F=653-663"/>
</dbReference>
<dbReference type="PDB" id="4YOO">
    <property type="method" value="X-ray"/>
    <property type="resolution" value="2.40 A"/>
    <property type="chains" value="A=391-600, A=781-972"/>
</dbReference>
<dbReference type="PDB" id="4YOS">
    <property type="method" value="X-ray"/>
    <property type="resolution" value="2.30 A"/>
    <property type="chains" value="A=391-599"/>
</dbReference>
<dbReference type="PDB" id="4YOZ">
    <property type="method" value="X-ray"/>
    <property type="resolution" value="2.25 A"/>
    <property type="chains" value="A=391-593, A=777-972"/>
</dbReference>
<dbReference type="PDB" id="5TUV">
    <property type="method" value="X-ray"/>
    <property type="resolution" value="2.90 A"/>
    <property type="chains" value="C/F=994-1031"/>
</dbReference>
<dbReference type="PDB" id="7SMC">
    <property type="method" value="X-ray"/>
    <property type="resolution" value="2.70 A"/>
    <property type="chains" value="A/C=391-972"/>
</dbReference>
<dbReference type="PDB" id="7SMD">
    <property type="method" value="X-ray"/>
    <property type="resolution" value="2.15 A"/>
    <property type="chains" value="A=391-972"/>
</dbReference>
<dbReference type="PDB" id="7SME">
    <property type="method" value="X-ray"/>
    <property type="resolution" value="2.64 A"/>
    <property type="chains" value="A=391-972"/>
</dbReference>
<dbReference type="PDB" id="7SMF">
    <property type="method" value="X-ray"/>
    <property type="resolution" value="3.00 A"/>
    <property type="chains" value="A/C=391-972"/>
</dbReference>
<dbReference type="PDBsum" id="1H28"/>
<dbReference type="PDBsum" id="4YOO"/>
<dbReference type="PDBsum" id="4YOS"/>
<dbReference type="PDBsum" id="4YOZ"/>
<dbReference type="PDBsum" id="5TUV"/>
<dbReference type="PDBsum" id="7SMC"/>
<dbReference type="PDBsum" id="7SMD"/>
<dbReference type="PDBsum" id="7SME"/>
<dbReference type="PDBsum" id="7SMF"/>
<dbReference type="SMR" id="P28749"/>
<dbReference type="BioGRID" id="111868">
    <property type="interactions" value="109"/>
</dbReference>
<dbReference type="ComplexPortal" id="CPX-2368">
    <property type="entry name" value="DREAM transcriptional repressor complex, RBL1 variant"/>
</dbReference>
<dbReference type="CORUM" id="P28749"/>
<dbReference type="DIP" id="DIP-148N"/>
<dbReference type="ELM" id="P28749"/>
<dbReference type="FunCoup" id="P28749">
    <property type="interactions" value="2614"/>
</dbReference>
<dbReference type="IntAct" id="P28749">
    <property type="interactions" value="66"/>
</dbReference>
<dbReference type="MINT" id="P28749"/>
<dbReference type="STRING" id="9606.ENSP00000362768"/>
<dbReference type="GlyGen" id="P28749">
    <property type="glycosylation" value="1 site, 1 O-linked glycan (1 site)"/>
</dbReference>
<dbReference type="iPTMnet" id="P28749"/>
<dbReference type="PhosphoSitePlus" id="P28749"/>
<dbReference type="BioMuta" id="RBL1"/>
<dbReference type="DMDM" id="90103515"/>
<dbReference type="jPOST" id="P28749"/>
<dbReference type="MassIVE" id="P28749"/>
<dbReference type="PaxDb" id="9606-ENSP00000362768"/>
<dbReference type="PeptideAtlas" id="P28749"/>
<dbReference type="ProteomicsDB" id="54497">
    <molecule id="P28749-1"/>
</dbReference>
<dbReference type="ProteomicsDB" id="54498">
    <molecule id="P28749-2"/>
</dbReference>
<dbReference type="Pumba" id="P28749"/>
<dbReference type="Antibodypedia" id="11876">
    <property type="antibodies" value="429 antibodies from 35 providers"/>
</dbReference>
<dbReference type="CPTC" id="P28749">
    <property type="antibodies" value="1 antibody"/>
</dbReference>
<dbReference type="DNASU" id="5933"/>
<dbReference type="Ensembl" id="ENST00000344359.7">
    <molecule id="P28749-2"/>
    <property type="protein sequence ID" value="ENSP00000343646.3"/>
    <property type="gene ID" value="ENSG00000080839.12"/>
</dbReference>
<dbReference type="Ensembl" id="ENST00000373664.8">
    <molecule id="P28749-1"/>
    <property type="protein sequence ID" value="ENSP00000362768.3"/>
    <property type="gene ID" value="ENSG00000080839.12"/>
</dbReference>
<dbReference type="GeneID" id="5933"/>
<dbReference type="KEGG" id="hsa:5933"/>
<dbReference type="MANE-Select" id="ENST00000373664.8">
    <property type="protein sequence ID" value="ENSP00000362768.3"/>
    <property type="RefSeq nucleotide sequence ID" value="NM_002895.5"/>
    <property type="RefSeq protein sequence ID" value="NP_002886.2"/>
</dbReference>
<dbReference type="UCSC" id="uc002xgi.5">
    <molecule id="P28749-1"/>
    <property type="organism name" value="human"/>
</dbReference>
<dbReference type="AGR" id="HGNC:9893"/>
<dbReference type="CTD" id="5933"/>
<dbReference type="DisGeNET" id="5933"/>
<dbReference type="GeneCards" id="RBL1"/>
<dbReference type="HGNC" id="HGNC:9893">
    <property type="gene designation" value="RBL1"/>
</dbReference>
<dbReference type="HPA" id="ENSG00000080839">
    <property type="expression patterns" value="Tissue enhanced (bone)"/>
</dbReference>
<dbReference type="MIM" id="116957">
    <property type="type" value="gene"/>
</dbReference>
<dbReference type="neXtProt" id="NX_P28749"/>
<dbReference type="OpenTargets" id="ENSG00000080839"/>
<dbReference type="PharmGKB" id="PA34257"/>
<dbReference type="VEuPathDB" id="HostDB:ENSG00000080839"/>
<dbReference type="eggNOG" id="KOG1010">
    <property type="taxonomic scope" value="Eukaryota"/>
</dbReference>
<dbReference type="GeneTree" id="ENSGT00950000183202"/>
<dbReference type="HOGENOM" id="CLU_008943_0_1_1"/>
<dbReference type="InParanoid" id="P28749"/>
<dbReference type="OMA" id="AILCELH"/>
<dbReference type="OrthoDB" id="844594at2759"/>
<dbReference type="PAN-GO" id="P28749">
    <property type="GO annotations" value="5 GO annotations based on evolutionary models"/>
</dbReference>
<dbReference type="PhylomeDB" id="P28749"/>
<dbReference type="TreeFam" id="TF105568"/>
<dbReference type="PathwayCommons" id="P28749"/>
<dbReference type="Reactome" id="R-HSA-1362277">
    <property type="pathway name" value="Transcription of E2F targets under negative control by DREAM complex"/>
</dbReference>
<dbReference type="Reactome" id="R-HSA-1362300">
    <property type="pathway name" value="Transcription of E2F targets under negative control by p107 (RBL1) and p130 (RBL2) in complex with HDAC1"/>
</dbReference>
<dbReference type="Reactome" id="R-HSA-1538133">
    <property type="pathway name" value="G0 and Early G1"/>
</dbReference>
<dbReference type="Reactome" id="R-HSA-2173796">
    <property type="pathway name" value="SMAD2/SMAD3:SMAD4 heterotrimer regulates transcription"/>
</dbReference>
<dbReference type="Reactome" id="R-HSA-6804114">
    <property type="pathway name" value="TP53 Regulates Transcription of Genes Involved in G2 Cell Cycle Arrest"/>
</dbReference>
<dbReference type="Reactome" id="R-HSA-69205">
    <property type="pathway name" value="G1/S-Specific Transcription"/>
</dbReference>
<dbReference type="Reactome" id="R-HSA-69231">
    <property type="pathway name" value="Cyclin D associated events in G1"/>
</dbReference>
<dbReference type="SignaLink" id="P28749"/>
<dbReference type="SIGNOR" id="P28749"/>
<dbReference type="BioGRID-ORCS" id="5933">
    <property type="hits" value="27 hits in 1165 CRISPR screens"/>
</dbReference>
<dbReference type="ChiTaRS" id="RBL1">
    <property type="organism name" value="human"/>
</dbReference>
<dbReference type="EvolutionaryTrace" id="P28749"/>
<dbReference type="GeneWiki" id="Retinoblastoma-like_protein_1"/>
<dbReference type="GenomeRNAi" id="5933"/>
<dbReference type="Pharos" id="P28749">
    <property type="development level" value="Tbio"/>
</dbReference>
<dbReference type="PRO" id="PR:P28749"/>
<dbReference type="Proteomes" id="UP000005640">
    <property type="component" value="Chromosome 20"/>
</dbReference>
<dbReference type="RNAct" id="P28749">
    <property type="molecule type" value="protein"/>
</dbReference>
<dbReference type="Bgee" id="ENSG00000080839">
    <property type="expression patterns" value="Expressed in buccal mucosa cell and 155 other cell types or tissues"/>
</dbReference>
<dbReference type="ExpressionAtlas" id="P28749">
    <property type="expression patterns" value="baseline and differential"/>
</dbReference>
<dbReference type="GO" id="GO:0000785">
    <property type="term" value="C:chromatin"/>
    <property type="evidence" value="ECO:0000318"/>
    <property type="project" value="GO_Central"/>
</dbReference>
<dbReference type="GO" id="GO:0005654">
    <property type="term" value="C:nucleoplasm"/>
    <property type="evidence" value="ECO:0000314"/>
    <property type="project" value="CAFA"/>
</dbReference>
<dbReference type="GO" id="GO:0005667">
    <property type="term" value="C:transcription regulator complex"/>
    <property type="evidence" value="ECO:0000318"/>
    <property type="project" value="GO_Central"/>
</dbReference>
<dbReference type="GO" id="GO:1990841">
    <property type="term" value="F:promoter-specific chromatin binding"/>
    <property type="evidence" value="ECO:0000314"/>
    <property type="project" value="MGI"/>
</dbReference>
<dbReference type="GO" id="GO:0000977">
    <property type="term" value="F:RNA polymerase II transcription regulatory region sequence-specific DNA binding"/>
    <property type="evidence" value="ECO:0000318"/>
    <property type="project" value="GO_Central"/>
</dbReference>
<dbReference type="GO" id="GO:0030154">
    <property type="term" value="P:cell differentiation"/>
    <property type="evidence" value="ECO:0000318"/>
    <property type="project" value="GO_Central"/>
</dbReference>
<dbReference type="GO" id="GO:0006325">
    <property type="term" value="P:chromatin organization"/>
    <property type="evidence" value="ECO:0007669"/>
    <property type="project" value="UniProtKB-KW"/>
</dbReference>
<dbReference type="GO" id="GO:2000773">
    <property type="term" value="P:negative regulation of cellular senescence"/>
    <property type="evidence" value="ECO:0000315"/>
    <property type="project" value="BHF-UCL"/>
</dbReference>
<dbReference type="GO" id="GO:2000134">
    <property type="term" value="P:negative regulation of G1/S transition of mitotic cell cycle"/>
    <property type="evidence" value="ECO:0000318"/>
    <property type="project" value="GO_Central"/>
</dbReference>
<dbReference type="GO" id="GO:0010629">
    <property type="term" value="P:negative regulation of gene expression"/>
    <property type="evidence" value="ECO:0000315"/>
    <property type="project" value="MGI"/>
</dbReference>
<dbReference type="GO" id="GO:0000122">
    <property type="term" value="P:negative regulation of transcription by RNA polymerase II"/>
    <property type="evidence" value="ECO:0007669"/>
    <property type="project" value="Ensembl"/>
</dbReference>
<dbReference type="GO" id="GO:0043550">
    <property type="term" value="P:regulation of lipid kinase activity"/>
    <property type="evidence" value="ECO:0000314"/>
    <property type="project" value="UniProtKB"/>
</dbReference>
<dbReference type="CDD" id="cd20605">
    <property type="entry name" value="CYCLIN_RBL1"/>
    <property type="match status" value="1"/>
</dbReference>
<dbReference type="FunFam" id="1.10.472.10:FF:000035">
    <property type="entry name" value="RB transcriptional corepressor-like 1"/>
    <property type="match status" value="1"/>
</dbReference>
<dbReference type="FunFam" id="1.10.472.140:FF:000001">
    <property type="entry name" value="Retinoblastoma-like 2, isoform CRA_a"/>
    <property type="match status" value="1"/>
</dbReference>
<dbReference type="FunFam" id="1.10.472.10:FF:000082">
    <property type="entry name" value="retinoblastoma-like protein 1 isoform X1"/>
    <property type="match status" value="1"/>
</dbReference>
<dbReference type="Gene3D" id="1.10.472.140">
    <property type="match status" value="1"/>
</dbReference>
<dbReference type="Gene3D" id="1.10.472.10">
    <property type="entry name" value="Cyclin-like"/>
    <property type="match status" value="3"/>
</dbReference>
<dbReference type="IDEAL" id="IID00130"/>
<dbReference type="InterPro" id="IPR013763">
    <property type="entry name" value="Cyclin-like_dom"/>
</dbReference>
<dbReference type="InterPro" id="IPR036915">
    <property type="entry name" value="Cyclin-like_sf"/>
</dbReference>
<dbReference type="InterPro" id="IPR002720">
    <property type="entry name" value="RB_A"/>
</dbReference>
<dbReference type="InterPro" id="IPR002719">
    <property type="entry name" value="RB_B"/>
</dbReference>
<dbReference type="InterPro" id="IPR015030">
    <property type="entry name" value="RB_C"/>
</dbReference>
<dbReference type="InterPro" id="IPR028309">
    <property type="entry name" value="RB_fam"/>
</dbReference>
<dbReference type="InterPro" id="IPR024599">
    <property type="entry name" value="RB_N"/>
</dbReference>
<dbReference type="PANTHER" id="PTHR13742">
    <property type="entry name" value="RETINOBLASTOMA-ASSOCIATED PROTEIN RB -RELATED"/>
    <property type="match status" value="1"/>
</dbReference>
<dbReference type="PANTHER" id="PTHR13742:SF20">
    <property type="entry name" value="RETINOBLASTOMA-LIKE PROTEIN 1"/>
    <property type="match status" value="1"/>
</dbReference>
<dbReference type="Pfam" id="PF11934">
    <property type="entry name" value="DUF3452"/>
    <property type="match status" value="1"/>
</dbReference>
<dbReference type="Pfam" id="PF01858">
    <property type="entry name" value="RB_A"/>
    <property type="match status" value="1"/>
</dbReference>
<dbReference type="Pfam" id="PF01857">
    <property type="entry name" value="RB_B"/>
    <property type="match status" value="1"/>
</dbReference>
<dbReference type="Pfam" id="PF08934">
    <property type="entry name" value="Rb_C"/>
    <property type="match status" value="1"/>
</dbReference>
<dbReference type="SMART" id="SM00385">
    <property type="entry name" value="CYCLIN"/>
    <property type="match status" value="1"/>
</dbReference>
<dbReference type="SMART" id="SM01367">
    <property type="entry name" value="DUF3452"/>
    <property type="match status" value="1"/>
</dbReference>
<dbReference type="SMART" id="SM01368">
    <property type="entry name" value="RB_A"/>
    <property type="match status" value="1"/>
</dbReference>
<dbReference type="SMART" id="SM01369">
    <property type="entry name" value="Rb_C"/>
    <property type="match status" value="1"/>
</dbReference>
<dbReference type="SUPFAM" id="SSF47954">
    <property type="entry name" value="Cyclin-like"/>
    <property type="match status" value="2"/>
</dbReference>
<reference key="1">
    <citation type="journal article" date="1993" name="Genes Dev.">
        <title>Inhibition of cell proliferation by p107, a relative of the retinoblastoma protein.</title>
        <authorList>
            <person name="Zhu L."/>
            <person name="van den Heuvel S."/>
            <person name="Helin K."/>
            <person name="Fattaey A."/>
            <person name="Ewen M."/>
            <person name="Livingston D."/>
            <person name="Dyson N."/>
            <person name="Harlow E."/>
        </authorList>
    </citation>
    <scope>NUCLEOTIDE SEQUENCE [MRNA] (ISOFORM 1)</scope>
    <scope>FUNCTION</scope>
</reference>
<reference key="2">
    <citation type="journal article" date="2004" name="Nat. Genet.">
        <title>Complete sequencing and characterization of 21,243 full-length human cDNAs.</title>
        <authorList>
            <person name="Ota T."/>
            <person name="Suzuki Y."/>
            <person name="Nishikawa T."/>
            <person name="Otsuki T."/>
            <person name="Sugiyama T."/>
            <person name="Irie R."/>
            <person name="Wakamatsu A."/>
            <person name="Hayashi K."/>
            <person name="Sato H."/>
            <person name="Nagai K."/>
            <person name="Kimura K."/>
            <person name="Makita H."/>
            <person name="Sekine M."/>
            <person name="Obayashi M."/>
            <person name="Nishi T."/>
            <person name="Shibahara T."/>
            <person name="Tanaka T."/>
            <person name="Ishii S."/>
            <person name="Yamamoto J."/>
            <person name="Saito K."/>
            <person name="Kawai Y."/>
            <person name="Isono Y."/>
            <person name="Nakamura Y."/>
            <person name="Nagahari K."/>
            <person name="Murakami K."/>
            <person name="Yasuda T."/>
            <person name="Iwayanagi T."/>
            <person name="Wagatsuma M."/>
            <person name="Shiratori A."/>
            <person name="Sudo H."/>
            <person name="Hosoiri T."/>
            <person name="Kaku Y."/>
            <person name="Kodaira H."/>
            <person name="Kondo H."/>
            <person name="Sugawara M."/>
            <person name="Takahashi M."/>
            <person name="Kanda K."/>
            <person name="Yokoi T."/>
            <person name="Furuya T."/>
            <person name="Kikkawa E."/>
            <person name="Omura Y."/>
            <person name="Abe K."/>
            <person name="Kamihara K."/>
            <person name="Katsuta N."/>
            <person name="Sato K."/>
            <person name="Tanikawa M."/>
            <person name="Yamazaki M."/>
            <person name="Ninomiya K."/>
            <person name="Ishibashi T."/>
            <person name="Yamashita H."/>
            <person name="Murakawa K."/>
            <person name="Fujimori K."/>
            <person name="Tanai H."/>
            <person name="Kimata M."/>
            <person name="Watanabe M."/>
            <person name="Hiraoka S."/>
            <person name="Chiba Y."/>
            <person name="Ishida S."/>
            <person name="Ono Y."/>
            <person name="Takiguchi S."/>
            <person name="Watanabe S."/>
            <person name="Yosida M."/>
            <person name="Hotuta T."/>
            <person name="Kusano J."/>
            <person name="Kanehori K."/>
            <person name="Takahashi-Fujii A."/>
            <person name="Hara H."/>
            <person name="Tanase T.-O."/>
            <person name="Nomura Y."/>
            <person name="Togiya S."/>
            <person name="Komai F."/>
            <person name="Hara R."/>
            <person name="Takeuchi K."/>
            <person name="Arita M."/>
            <person name="Imose N."/>
            <person name="Musashino K."/>
            <person name="Yuuki H."/>
            <person name="Oshima A."/>
            <person name="Sasaki N."/>
            <person name="Aotsuka S."/>
            <person name="Yoshikawa Y."/>
            <person name="Matsunawa H."/>
            <person name="Ichihara T."/>
            <person name="Shiohata N."/>
            <person name="Sano S."/>
            <person name="Moriya S."/>
            <person name="Momiyama H."/>
            <person name="Satoh N."/>
            <person name="Takami S."/>
            <person name="Terashima Y."/>
            <person name="Suzuki O."/>
            <person name="Nakagawa S."/>
            <person name="Senoh A."/>
            <person name="Mizoguchi H."/>
            <person name="Goto Y."/>
            <person name="Shimizu F."/>
            <person name="Wakebe H."/>
            <person name="Hishigaki H."/>
            <person name="Watanabe T."/>
            <person name="Sugiyama A."/>
            <person name="Takemoto M."/>
            <person name="Kawakami B."/>
            <person name="Yamazaki M."/>
            <person name="Watanabe K."/>
            <person name="Kumagai A."/>
            <person name="Itakura S."/>
            <person name="Fukuzumi Y."/>
            <person name="Fujimori Y."/>
            <person name="Komiyama M."/>
            <person name="Tashiro H."/>
            <person name="Tanigami A."/>
            <person name="Fujiwara T."/>
            <person name="Ono T."/>
            <person name="Yamada K."/>
            <person name="Fujii Y."/>
            <person name="Ozaki K."/>
            <person name="Hirao M."/>
            <person name="Ohmori Y."/>
            <person name="Kawabata A."/>
            <person name="Hikiji T."/>
            <person name="Kobatake N."/>
            <person name="Inagaki H."/>
            <person name="Ikema Y."/>
            <person name="Okamoto S."/>
            <person name="Okitani R."/>
            <person name="Kawakami T."/>
            <person name="Noguchi S."/>
            <person name="Itoh T."/>
            <person name="Shigeta K."/>
            <person name="Senba T."/>
            <person name="Matsumura K."/>
            <person name="Nakajima Y."/>
            <person name="Mizuno T."/>
            <person name="Morinaga M."/>
            <person name="Sasaki M."/>
            <person name="Togashi T."/>
            <person name="Oyama M."/>
            <person name="Hata H."/>
            <person name="Watanabe M."/>
            <person name="Komatsu T."/>
            <person name="Mizushima-Sugano J."/>
            <person name="Satoh T."/>
            <person name="Shirai Y."/>
            <person name="Takahashi Y."/>
            <person name="Nakagawa K."/>
            <person name="Okumura K."/>
            <person name="Nagase T."/>
            <person name="Nomura N."/>
            <person name="Kikuchi H."/>
            <person name="Masuho Y."/>
            <person name="Yamashita R."/>
            <person name="Nakai K."/>
            <person name="Yada T."/>
            <person name="Nakamura Y."/>
            <person name="Ohara O."/>
            <person name="Isogai T."/>
            <person name="Sugano S."/>
        </authorList>
    </citation>
    <scope>NUCLEOTIDE SEQUENCE [LARGE SCALE MRNA] (ISOFORM 1)</scope>
    <source>
        <tissue>Tongue</tissue>
    </source>
</reference>
<reference key="3">
    <citation type="journal article" date="2001" name="Nature">
        <title>The DNA sequence and comparative analysis of human chromosome 20.</title>
        <authorList>
            <person name="Deloukas P."/>
            <person name="Matthews L.H."/>
            <person name="Ashurst J.L."/>
            <person name="Burton J."/>
            <person name="Gilbert J.G.R."/>
            <person name="Jones M."/>
            <person name="Stavrides G."/>
            <person name="Almeida J.P."/>
            <person name="Babbage A.K."/>
            <person name="Bagguley C.L."/>
            <person name="Bailey J."/>
            <person name="Barlow K.F."/>
            <person name="Bates K.N."/>
            <person name="Beard L.M."/>
            <person name="Beare D.M."/>
            <person name="Beasley O.P."/>
            <person name="Bird C.P."/>
            <person name="Blakey S.E."/>
            <person name="Bridgeman A.M."/>
            <person name="Brown A.J."/>
            <person name="Buck D."/>
            <person name="Burrill W.D."/>
            <person name="Butler A.P."/>
            <person name="Carder C."/>
            <person name="Carter N.P."/>
            <person name="Chapman J.C."/>
            <person name="Clamp M."/>
            <person name="Clark G."/>
            <person name="Clark L.N."/>
            <person name="Clark S.Y."/>
            <person name="Clee C.M."/>
            <person name="Clegg S."/>
            <person name="Cobley V.E."/>
            <person name="Collier R.E."/>
            <person name="Connor R.E."/>
            <person name="Corby N.R."/>
            <person name="Coulson A."/>
            <person name="Coville G.J."/>
            <person name="Deadman R."/>
            <person name="Dhami P.D."/>
            <person name="Dunn M."/>
            <person name="Ellington A.G."/>
            <person name="Frankland J.A."/>
            <person name="Fraser A."/>
            <person name="French L."/>
            <person name="Garner P."/>
            <person name="Grafham D.V."/>
            <person name="Griffiths C."/>
            <person name="Griffiths M.N.D."/>
            <person name="Gwilliam R."/>
            <person name="Hall R.E."/>
            <person name="Hammond S."/>
            <person name="Harley J.L."/>
            <person name="Heath P.D."/>
            <person name="Ho S."/>
            <person name="Holden J.L."/>
            <person name="Howden P.J."/>
            <person name="Huckle E."/>
            <person name="Hunt A.R."/>
            <person name="Hunt S.E."/>
            <person name="Jekosch K."/>
            <person name="Johnson C.M."/>
            <person name="Johnson D."/>
            <person name="Kay M.P."/>
            <person name="Kimberley A.M."/>
            <person name="King A."/>
            <person name="Knights A."/>
            <person name="Laird G.K."/>
            <person name="Lawlor S."/>
            <person name="Lehvaeslaiho M.H."/>
            <person name="Leversha M.A."/>
            <person name="Lloyd C."/>
            <person name="Lloyd D.M."/>
            <person name="Lovell J.D."/>
            <person name="Marsh V.L."/>
            <person name="Martin S.L."/>
            <person name="McConnachie L.J."/>
            <person name="McLay K."/>
            <person name="McMurray A.A."/>
            <person name="Milne S.A."/>
            <person name="Mistry D."/>
            <person name="Moore M.J.F."/>
            <person name="Mullikin J.C."/>
            <person name="Nickerson T."/>
            <person name="Oliver K."/>
            <person name="Parker A."/>
            <person name="Patel R."/>
            <person name="Pearce T.A.V."/>
            <person name="Peck A.I."/>
            <person name="Phillimore B.J.C.T."/>
            <person name="Prathalingam S.R."/>
            <person name="Plumb R.W."/>
            <person name="Ramsay H."/>
            <person name="Rice C.M."/>
            <person name="Ross M.T."/>
            <person name="Scott C.E."/>
            <person name="Sehra H.K."/>
            <person name="Shownkeen R."/>
            <person name="Sims S."/>
            <person name="Skuce C.D."/>
            <person name="Smith M.L."/>
            <person name="Soderlund C."/>
            <person name="Steward C.A."/>
            <person name="Sulston J.E."/>
            <person name="Swann R.M."/>
            <person name="Sycamore N."/>
            <person name="Taylor R."/>
            <person name="Tee L."/>
            <person name="Thomas D.W."/>
            <person name="Thorpe A."/>
            <person name="Tracey A."/>
            <person name="Tromans A.C."/>
            <person name="Vaudin M."/>
            <person name="Wall M."/>
            <person name="Wallis J.M."/>
            <person name="Whitehead S.L."/>
            <person name="Whittaker P."/>
            <person name="Willey D.L."/>
            <person name="Williams L."/>
            <person name="Williams S.A."/>
            <person name="Wilming L."/>
            <person name="Wray P.W."/>
            <person name="Hubbard T."/>
            <person name="Durbin R.M."/>
            <person name="Bentley D.R."/>
            <person name="Beck S."/>
            <person name="Rogers J."/>
        </authorList>
    </citation>
    <scope>NUCLEOTIDE SEQUENCE [LARGE SCALE GENOMIC DNA]</scope>
</reference>
<reference key="4">
    <citation type="submission" date="2005-09" db="EMBL/GenBank/DDBJ databases">
        <authorList>
            <person name="Mural R.J."/>
            <person name="Istrail S."/>
            <person name="Sutton G.G."/>
            <person name="Florea L."/>
            <person name="Halpern A.L."/>
            <person name="Mobarry C.M."/>
            <person name="Lippert R."/>
            <person name="Walenz B."/>
            <person name="Shatkay H."/>
            <person name="Dew I."/>
            <person name="Miller J.R."/>
            <person name="Flanigan M.J."/>
            <person name="Edwards N.J."/>
            <person name="Bolanos R."/>
            <person name="Fasulo D."/>
            <person name="Halldorsson B.V."/>
            <person name="Hannenhalli S."/>
            <person name="Turner R."/>
            <person name="Yooseph S."/>
            <person name="Lu F."/>
            <person name="Nusskern D.R."/>
            <person name="Shue B.C."/>
            <person name="Zheng X.H."/>
            <person name="Zhong F."/>
            <person name="Delcher A.L."/>
            <person name="Huson D.H."/>
            <person name="Kravitz S.A."/>
            <person name="Mouchard L."/>
            <person name="Reinert K."/>
            <person name="Remington K.A."/>
            <person name="Clark A.G."/>
            <person name="Waterman M.S."/>
            <person name="Eichler E.E."/>
            <person name="Adams M.D."/>
            <person name="Hunkapiller M.W."/>
            <person name="Myers E.W."/>
            <person name="Venter J.C."/>
        </authorList>
    </citation>
    <scope>NUCLEOTIDE SEQUENCE [LARGE SCALE GENOMIC DNA]</scope>
</reference>
<reference key="5">
    <citation type="journal article" date="2004" name="Genome Res.">
        <title>The status, quality, and expansion of the NIH full-length cDNA project: the Mammalian Gene Collection (MGC).</title>
        <authorList>
            <consortium name="The MGC Project Team"/>
        </authorList>
    </citation>
    <scope>NUCLEOTIDE SEQUENCE [LARGE SCALE MRNA] (ISOFORM 2)</scope>
    <source>
        <tissue>Testis</tissue>
    </source>
</reference>
<reference key="6">
    <citation type="journal article" date="1991" name="Cell">
        <title>Molecular cloning, chromosomal mapping, and expression of the cDNA for p107, a retinoblastoma gene product-related protein.</title>
        <authorList>
            <person name="Ewen M.E."/>
            <person name="Xing Y."/>
            <person name="Lawrence J.B."/>
            <person name="Livingston D.M."/>
        </authorList>
    </citation>
    <scope>NUCLEOTIDE SEQUENCE [MRNA] OF 134-1068 (ISOFORM 1)</scope>
    <scope>PARTIAL PROTEIN SEQUENCE</scope>
</reference>
<reference key="7">
    <citation type="journal article" date="1995" name="Mol. Cell. Biol.">
        <title>Differential roles of two tandem E2F sites in repression of the human p107 promoter by retinoblastoma and p107 proteins.</title>
        <authorList>
            <person name="Zhu L."/>
            <person name="Zhu L."/>
            <person name="Xie E."/>
            <person name="Chang L.S."/>
        </authorList>
    </citation>
    <scope>NUCLEOTIDE SEQUENCE [GENOMIC DNA] OF 1-52</scope>
</reference>
<reference key="8">
    <citation type="journal article" date="2002" name="Mol. Cell. Biol.">
        <title>Reversal of growth suppression by p107 via direct phosphorylation by cyclin D1/cyclin-dependent kinase 4.</title>
        <authorList>
            <person name="Leng X."/>
            <person name="Noble M."/>
            <person name="Adams P.D."/>
            <person name="Qin J."/>
            <person name="Harper J.W."/>
        </authorList>
    </citation>
    <scope>PROTEIN SEQUENCE OF 320-334; 364-374; 635-657; 949-977 AND 1006-1012</scope>
    <scope>PHOSPHORYLATION AT THR-332; THR-369; THR-385; SER-640; SER-762; SER-964; SER-975; SER-988; THR-997 AND SER-1009</scope>
    <scope>MUTAGENESIS OF SER-640; SER-643; SER-650 AND 657-LYS--LEU-660</scope>
    <scope>IDENTIFICATION BY MASS SPECTROMETRY</scope>
</reference>
<reference key="9">
    <citation type="journal article" date="1989" name="Cell">
        <title>The cellular 107K protein that binds to adenovirus E1A also associates with the large T antigens of SV40 and JC virus.</title>
        <authorList>
            <person name="Dyson N."/>
            <person name="Buchkovich K."/>
            <person name="Whyte P."/>
            <person name="Harlow E."/>
        </authorList>
    </citation>
    <scope>INTERACTION WITH SV40 AND JC VIRUS LARGE T ANTIGEN (MICROBIAL INFECTION)</scope>
</reference>
<reference key="10">
    <citation type="journal article" date="1994" name="Mol. Cell. Biol.">
        <title>Differential specificity for binding of retinoblastoma binding protein 2 to RB, p107, and TATA-binding protein.</title>
        <authorList>
            <person name="Kim Y.W."/>
            <person name="Otterson G.A."/>
            <person name="Kratzke R.A."/>
            <person name="Coxon A.B."/>
            <person name="Kaye F.J."/>
        </authorList>
    </citation>
    <scope>INTERACTION WITH KDM5A</scope>
</reference>
<reference key="11">
    <citation type="journal article" date="2002" name="Cancer Cell">
        <title>Che-1 affects cell growth by interfering with the recruitment of HDAC1 by Rb.</title>
        <authorList>
            <person name="Bruno T."/>
            <person name="De Angelis R."/>
            <person name="De Nicola F."/>
            <person name="Barbato C."/>
            <person name="Di Padova M."/>
            <person name="Corbi N."/>
            <person name="Libri V."/>
            <person name="Benassi B."/>
            <person name="Mattei E."/>
            <person name="Chersi A."/>
            <person name="Soddu S."/>
            <person name="Floridi A."/>
            <person name="Passananti C."/>
            <person name="Fanciulli M."/>
        </authorList>
    </citation>
    <scope>INTERACTION WITH AATF</scope>
</reference>
<reference key="12">
    <citation type="journal article" date="2002" name="J. Biol. Chem.">
        <title>Distinct phosphorylation events regulate p130- and p107-mediated repression of E2F-4.</title>
        <authorList>
            <person name="Farkas T."/>
            <person name="Hansen K."/>
            <person name="Holm K."/>
            <person name="Lukas J."/>
            <person name="Bartek J."/>
        </authorList>
    </citation>
    <scope>PHOSPHORYLATION AT THR-369 AND SER-650</scope>
</reference>
<reference key="13">
    <citation type="journal article" date="2005" name="Cell">
        <title>Structure of the Rb C-terminal domain bound to E2F1-DP1: a mechanism for phosphorylation-induced E2F release.</title>
        <authorList>
            <person name="Rubin S.M."/>
            <person name="Gall A.-L."/>
            <person name="Zheng N."/>
            <person name="Pavletich N.P."/>
        </authorList>
    </citation>
    <scope>INTERACTION WITH E2F4 AND TFDP1</scope>
</reference>
<reference key="14">
    <citation type="journal article" date="2007" name="Cell Cycle">
        <title>LINC, a human complex that is related to pRB-containing complexes in invertebrates regulates the expression of G2/M genes.</title>
        <authorList>
            <person name="Schmit F."/>
            <person name="Korenjak M."/>
            <person name="Mannefeld M."/>
            <person name="Schmitt K."/>
            <person name="Franke C."/>
            <person name="von Eyss B."/>
            <person name="Gagrica S."/>
            <person name="Haenel F."/>
            <person name="Brehm A."/>
            <person name="Gaubatz S."/>
        </authorList>
    </citation>
    <scope>FUNCTION</scope>
    <scope>IDENTIFICATION IN THE DREAM COMPLEX</scope>
</reference>
<reference key="15">
    <citation type="journal article" date="2009" name="Sci. Signal.">
        <title>Quantitative phosphoproteomic analysis of T cell receptor signaling reveals system-wide modulation of protein-protein interactions.</title>
        <authorList>
            <person name="Mayya V."/>
            <person name="Lundgren D.H."/>
            <person name="Hwang S.-I."/>
            <person name="Rezaul K."/>
            <person name="Wu L."/>
            <person name="Eng J.K."/>
            <person name="Rodionov V."/>
            <person name="Han D.K."/>
        </authorList>
    </citation>
    <scope>PHOSPHORYLATION [LARGE SCALE ANALYSIS] AT THR-385; SER-749 AND SER-762</scope>
    <scope>IDENTIFICATION BY MASS SPECTROMETRY [LARGE SCALE ANALYSIS]</scope>
    <source>
        <tissue>Leukemic T-cell</tissue>
    </source>
</reference>
<reference key="16">
    <citation type="journal article" date="2010" name="PLoS ONE">
        <title>JC virus small T antigen binds phosphatase PP2A and Rb family proteins and is required for efficient viral DNA replication activity.</title>
        <authorList>
            <person name="Bollag B."/>
            <person name="Hofstetter C.A."/>
            <person name="Reviriego-Mendoza M.M."/>
            <person name="Frisque R.J."/>
        </authorList>
    </citation>
    <scope>INTERACTION WITH JC VIRUS SMALL T ANTIGEN (MICROBIAL INFECTION)</scope>
</reference>
<reference key="17">
    <citation type="journal article" date="2013" name="J. Proteome Res.">
        <title>Toward a comprehensive characterization of a human cancer cell phosphoproteome.</title>
        <authorList>
            <person name="Zhou H."/>
            <person name="Di Palma S."/>
            <person name="Preisinger C."/>
            <person name="Peng M."/>
            <person name="Polat A.N."/>
            <person name="Heck A.J."/>
            <person name="Mohammed S."/>
        </authorList>
    </citation>
    <scope>PHOSPHORYLATION [LARGE SCALE ANALYSIS] AT THR-332; THR-369; THR-385; SER-640; SER-749; SER-762; SER-988 AND SER-1041</scope>
    <scope>IDENTIFICATION BY MASS SPECTROMETRY [LARGE SCALE ANALYSIS]</scope>
    <source>
        <tissue>Cervix carcinoma</tissue>
        <tissue>Erythroleukemia</tissue>
    </source>
</reference>
<accession>P28749</accession>
<accession>A8K2W5</accession>
<accession>Q4VXA0</accession>
<accession>Q8N5K6</accession>
<accession>Q9H1L5</accession>
<accession>Q9H1M1</accession>
<name>RBL1_HUMAN</name>
<proteinExistence type="evidence at protein level"/>
<comment type="function">
    <text evidence="2 7 11">Key regulator of entry into cell division (PubMed:17671431). Directly involved in heterochromatin formation by maintaining overall chromatin structure and, in particular, that of constitutive heterochromatin by stabilizing histone methylation (By similarity). Recruits and targets histone methyltransferases KMT5B and KMT5C, leading to epigenetic transcriptional repression (By similarity). Controls histone H4 'Lys-20' trimethylation (By similarity). Probably acts as a transcription repressor by recruiting chromatin-modifying enzymes to promoters (By similarity). Potent inhibitor of E2F-mediated trans-activation (PubMed:8319904). May act as a tumor suppressor (PubMed:8319904).</text>
</comment>
<comment type="subunit">
    <text evidence="1 2 5 6 7 10">Component of the DREAM complex (also named LINC complex) at least composed of E2F4, E2F5, LIN9, LIN37, LIN52, LIN54, MYBL1, MYBL2, RBL1, RBL2, RBBP4, TFDP1 and TFDP2 (PubMed:16360038, PubMed:17671431). The complex exists in quiescent cells where it represses cell cycle-dependent genes (PubMed:17671431). It dissociates in S phase when LIN9, LIN37, LIN52 and LIN54 form a subcomplex that binds to MYBL2 (PubMed:17671431). Interacts with AATF (PubMed:12450794). Interacts with KDM5A (PubMed:7935440). Interacts with KMT5B and KMT5C (By similarity). Interacts with USP4 (By similarity). Interacts with RBBP9 (By similarity).</text>
</comment>
<comment type="subunit">
    <text evidence="9">(Microbial infection) Interacts with SV40 and JC virus large T antigens. Large T antigen, but not E1A, binds only to the unphosphorylated form.</text>
</comment>
<comment type="subunit">
    <text evidence="8">(Microbial infection) Interacts with JC virus small t antigen.</text>
</comment>
<comment type="interaction">
    <interactant intactId="EBI-971402">
        <id>P28749</id>
    </interactant>
    <interactant intactId="EBI-742722">
        <id>Q9BUH8</id>
        <label>BEGAIN</label>
    </interactant>
    <organismsDiffer>false</organismsDiffer>
    <experiments>2</experiments>
</comment>
<comment type="interaction">
    <interactant intactId="EBI-971402">
        <id>P28749</id>
    </interactant>
    <interactant intactId="EBI-295644">
        <id>P11802</id>
        <label>CDK4</label>
    </interactant>
    <organismsDiffer>false</organismsDiffer>
    <experiments>2</experiments>
</comment>
<comment type="interaction">
    <interactant intactId="EBI-971402">
        <id>P28749</id>
    </interactant>
    <interactant intactId="EBI-715527">
        <id>Q13574-2</id>
        <label>DGKZ</label>
    </interactant>
    <organismsDiffer>false</organismsDiffer>
    <experiments>2</experiments>
</comment>
<comment type="interaction">
    <interactant intactId="EBI-971402">
        <id>P28749</id>
    </interactant>
    <interactant intactId="EBI-1053596">
        <id>Q13627</id>
        <label>DYRK1A</label>
    </interactant>
    <organismsDiffer>false</organismsDiffer>
    <experiments>4</experiments>
</comment>
<comment type="interaction">
    <interactant intactId="EBI-971402">
        <id>P28749</id>
    </interactant>
    <interactant intactId="EBI-634187">
        <id>Q9Y463</id>
        <label>DYRK1B</label>
    </interactant>
    <organismsDiffer>false</organismsDiffer>
    <experiments>4</experiments>
</comment>
<comment type="interaction">
    <interactant intactId="EBI-971402">
        <id>P28749</id>
    </interactant>
    <interactant intactId="EBI-1644164">
        <id>O43524</id>
        <label>FOXO3</label>
    </interactant>
    <organismsDiffer>false</organismsDiffer>
    <experiments>3</experiments>
</comment>
<comment type="interaction">
    <interactant intactId="EBI-971402">
        <id>P28749</id>
    </interactant>
    <interactant intactId="EBI-2650369">
        <id>Q14653</id>
        <label>IRF3</label>
    </interactant>
    <organismsDiffer>false</organismsDiffer>
    <experiments>2</experiments>
</comment>
<comment type="interaction">
    <interactant intactId="EBI-971402">
        <id>P28749</id>
    </interactant>
    <interactant intactId="EBI-712311">
        <id>P67775</id>
        <label>PPP2CA</label>
    </interactant>
    <organismsDiffer>false</organismsDiffer>
    <experiments>2</experiments>
</comment>
<comment type="interaction">
    <interactant intactId="EBI-971402">
        <id>P28749</id>
    </interactant>
    <interactant intactId="EBI-866453">
        <id>P03129</id>
        <label>E7</label>
    </interactant>
    <organismsDiffer>true</organismsDiffer>
    <experiments>4</experiments>
</comment>
<comment type="interaction">
    <interactant intactId="EBI-971402">
        <id>P28749</id>
    </interactant>
    <interactant intactId="EBI-1208116">
        <id>P24610</id>
        <label>Pax3</label>
    </interactant>
    <organismsDiffer>true</organismsDiffer>
    <experiments>3</experiments>
</comment>
<comment type="interaction">
    <interactant intactId="EBI-971402">
        <id>P28749</id>
    </interactant>
    <interactant intactId="EBI-1802585">
        <id>Q923E4</id>
        <label>Sirt1</label>
    </interactant>
    <organismsDiffer>true</organismsDiffer>
    <experiments>2</experiments>
</comment>
<comment type="interaction">
    <interactant intactId="EBI-971402">
        <id>P28749</id>
    </interactant>
    <interactant intactId="EBI-2603114">
        <id>P03255</id>
    </interactant>
    <organismsDiffer>true</organismsDiffer>
    <experiments>3</experiments>
</comment>
<comment type="subcellular location">
    <subcellularLocation>
        <location evidence="13">Nucleus</location>
    </subcellularLocation>
</comment>
<comment type="alternative products">
    <event type="alternative splicing"/>
    <isoform>
        <id>P28749-1</id>
        <name>1</name>
        <sequence type="displayed"/>
    </isoform>
    <isoform>
        <id>P28749-2</id>
        <name>2</name>
        <sequence type="described" ref="VSP_017496"/>
    </isoform>
</comment>
<comment type="PTM">
    <text evidence="3 4">Cell-cycle arrest properties are inactivated by phosphorylation on Thr-332, Ser-640, Ser-964 and Ser-975 by CDK4.</text>
</comment>
<comment type="similarity">
    <text evidence="13">Belongs to the retinoblastoma protein (RB) family.</text>
</comment>
<protein>
    <recommendedName>
        <fullName>Retinoblastoma-like protein 1</fullName>
    </recommendedName>
    <alternativeName>
        <fullName>107 kDa retinoblastoma-associated protein</fullName>
        <shortName>p107</shortName>
    </alternativeName>
    <alternativeName>
        <fullName>pRb1</fullName>
    </alternativeName>
</protein>
<feature type="chain" id="PRO_0000167839" description="Retinoblastoma-like protein 1">
    <location>
        <begin position="1"/>
        <end position="1068"/>
    </location>
</feature>
<feature type="region of interest" description="Pocket; binds T and E1A" evidence="14">
    <location>
        <begin position="385"/>
        <end position="949"/>
    </location>
</feature>
<feature type="region of interest" description="Domain A" evidence="13">
    <location>
        <begin position="385"/>
        <end position="584"/>
    </location>
</feature>
<feature type="region of interest" description="Spacer" evidence="13">
    <location>
        <begin position="585"/>
        <end position="780"/>
    </location>
</feature>
<feature type="region of interest" description="Domain B" evidence="13">
    <location>
        <begin position="781"/>
        <end position="949"/>
    </location>
</feature>
<feature type="modified residue" description="Phosphothreonine; by CDK2" evidence="3 16">
    <location>
        <position position="332"/>
    </location>
</feature>
<feature type="modified residue" description="Phosphothreonine; by CDK4" evidence="3 4 16">
    <location>
        <position position="369"/>
    </location>
</feature>
<feature type="modified residue" description="Phosphothreonine; by CDK2" evidence="3 15 16">
    <location>
        <position position="385"/>
    </location>
</feature>
<feature type="modified residue" description="Phosphoserine; by CDK2 and CDK4" evidence="3 16">
    <location>
        <position position="640"/>
    </location>
</feature>
<feature type="modified residue" description="Phosphoserine" evidence="4">
    <location>
        <position position="650"/>
    </location>
</feature>
<feature type="modified residue" description="Phosphoserine" evidence="15 16">
    <location>
        <position position="749"/>
    </location>
</feature>
<feature type="modified residue" description="Phosphoserine; by CDK2" evidence="3 15 16">
    <location>
        <position position="762"/>
    </location>
</feature>
<feature type="modified residue" description="Phosphoserine; by CDK2 and CDK4" evidence="3">
    <location>
        <position position="964"/>
    </location>
</feature>
<feature type="modified residue" description="Phosphoserine; by CDK2 and CDK4" evidence="3">
    <location>
        <position position="975"/>
    </location>
</feature>
<feature type="modified residue" description="Phosphoserine; by CDK2" evidence="3 16">
    <location>
        <position position="988"/>
    </location>
</feature>
<feature type="modified residue" description="Phosphothreonine; by CDK2" evidence="3">
    <location>
        <position position="997"/>
    </location>
</feature>
<feature type="modified residue" description="Phosphoserine; by CDK2" evidence="3">
    <location>
        <position position="1009"/>
    </location>
</feature>
<feature type="modified residue" description="Phosphoserine" evidence="16">
    <location>
        <position position="1041"/>
    </location>
</feature>
<feature type="splice variant" id="VSP_017496" description="In isoform 2." evidence="12">
    <original>SLKDINNMIRQGEQRTKKRVIAIDSDAESPAKRVCQENDDVLLKRLQDVVSERANH</original>
    <variation>VR</variation>
    <location>
        <begin position="1013"/>
        <end position="1068"/>
    </location>
</feature>
<feature type="sequence variant" id="VAR_034443" description="In dbSNP:rs8114297.">
    <original>I</original>
    <variation>M</variation>
    <location>
        <position position="1035"/>
    </location>
</feature>
<feature type="mutagenesis site" description="Strongly reduces phosphorylation by CDK2 and CDK4." evidence="3">
    <original>S</original>
    <variation>A</variation>
    <location>
        <position position="640"/>
    </location>
</feature>
<feature type="mutagenesis site" description="No effect on S-640 phosphorylation, but strongly increases S-640 phosphorylation; when associated with 657-A--A-660." evidence="3">
    <original>S</original>
    <variation>R</variation>
    <location>
        <position position="643"/>
    </location>
</feature>
<feature type="mutagenesis site" description="No effect on phosphorylation by CDK2." evidence="3">
    <original>S</original>
    <variation>A</variation>
    <location>
        <position position="650"/>
    </location>
</feature>
<feature type="mutagenesis site" description="Reduces S-640 phosphorylation by CDK2 and CDK4." evidence="3">
    <original>KRRL</original>
    <variation>AAAA</variation>
    <location>
        <begin position="657"/>
        <end position="660"/>
    </location>
</feature>
<feature type="sequence conflict" description="In Ref. 8; AA sequence." evidence="13" ref="8">
    <location>
        <position position="326"/>
    </location>
</feature>
<feature type="sequence conflict" description="In Ref. 1 and 6." evidence="13" ref="1 6">
    <original>G</original>
    <variation>S</variation>
    <location>
        <position position="928"/>
    </location>
</feature>
<feature type="helix" evidence="18">
    <location>
        <begin position="392"/>
        <end position="401"/>
    </location>
</feature>
<feature type="helix" evidence="18">
    <location>
        <begin position="410"/>
        <end position="418"/>
    </location>
</feature>
<feature type="strand" evidence="18">
    <location>
        <begin position="419"/>
        <end position="421"/>
    </location>
</feature>
<feature type="helix" evidence="18">
    <location>
        <begin position="424"/>
        <end position="442"/>
    </location>
</feature>
<feature type="strand" evidence="18">
    <location>
        <begin position="447"/>
        <end position="449"/>
    </location>
</feature>
<feature type="helix" evidence="18">
    <location>
        <begin position="454"/>
        <end position="478"/>
    </location>
</feature>
<feature type="helix" evidence="18">
    <location>
        <begin position="480"/>
        <end position="483"/>
    </location>
</feature>
<feature type="helix" evidence="18">
    <location>
        <begin position="489"/>
        <end position="492"/>
    </location>
</feature>
<feature type="helix" evidence="18">
    <location>
        <begin position="495"/>
        <end position="512"/>
    </location>
</feature>
<feature type="helix" evidence="18">
    <location>
        <begin position="521"/>
        <end position="525"/>
    </location>
</feature>
<feature type="helix" evidence="18">
    <location>
        <begin position="530"/>
        <end position="533"/>
    </location>
</feature>
<feature type="helix" evidence="18">
    <location>
        <begin position="536"/>
        <end position="543"/>
    </location>
</feature>
<feature type="helix" evidence="18">
    <location>
        <begin position="549"/>
        <end position="564"/>
    </location>
</feature>
<feature type="helix" evidence="18">
    <location>
        <begin position="566"/>
        <end position="568"/>
    </location>
</feature>
<feature type="helix" evidence="18">
    <location>
        <begin position="574"/>
        <end position="580"/>
    </location>
</feature>
<feature type="turn" evidence="18">
    <location>
        <begin position="581"/>
        <end position="583"/>
    </location>
</feature>
<feature type="helix" evidence="18">
    <location>
        <begin position="588"/>
        <end position="592"/>
    </location>
</feature>
<feature type="helix" evidence="18">
    <location>
        <begin position="787"/>
        <end position="809"/>
    </location>
</feature>
<feature type="helix" evidence="18">
    <location>
        <begin position="814"/>
        <end position="830"/>
    </location>
</feature>
<feature type="helix" evidence="18">
    <location>
        <begin position="832"/>
        <end position="835"/>
    </location>
</feature>
<feature type="helix" evidence="18">
    <location>
        <begin position="840"/>
        <end position="855"/>
    </location>
</feature>
<feature type="helix" evidence="18">
    <location>
        <begin position="861"/>
        <end position="868"/>
    </location>
</feature>
<feature type="helix" evidence="18">
    <location>
        <begin position="877"/>
        <end position="880"/>
    </location>
</feature>
<feature type="strand" evidence="18">
    <location>
        <begin position="881"/>
        <end position="885"/>
    </location>
</feature>
<feature type="strand" evidence="18">
    <location>
        <begin position="926"/>
        <end position="928"/>
    </location>
</feature>
<feature type="helix" evidence="18">
    <location>
        <begin position="930"/>
        <end position="936"/>
    </location>
</feature>
<feature type="helix" evidence="18">
    <location>
        <begin position="938"/>
        <end position="946"/>
    </location>
</feature>
<feature type="helix" evidence="18">
    <location>
        <begin position="947"/>
        <end position="949"/>
    </location>
</feature>
<feature type="strand" evidence="17">
    <location>
        <begin position="1001"/>
        <end position="1005"/>
    </location>
</feature>
<feature type="turn" evidence="17">
    <location>
        <begin position="1006"/>
        <end position="1008"/>
    </location>
</feature>
<feature type="helix" evidence="17">
    <location>
        <begin position="1011"/>
        <end position="1023"/>
    </location>
</feature>
<sequence length="1068" mass="120847">MFEDKPHAEGAAVVAAAGEALQALCQELNLDEGSAAEALDDFTAIRGNYSLEGEVTHWLACSLYVACRKSIIPTVGKGIMEGNCVSLTRILRSAKLSLIQFFSKMKKWMDMSNLPQEFRERIERLERNFEVSTVIFKKYEPIFLDIFQNPYEEPPKLPRSRKQRRIPCSVKDLFNFCWTLFVYTKGNFRMIGDDLVNSYHLLLCCLDLIFANAIMCPNRQDLLNPSFKGLPSDFHTADFTASEEPPCIIAVLCELHDGLLVEAKGIKEHYFKPYISKLFDRKILKGECLLDLSSFTDNSKAVNKEYEEYVLTVGDFDERIFLGADAEEEIGTPRKFTRDTPLGKLTAQANVEYNLQQHFEKKRSFAPSTPLTGRRYLREKEAVITPVASATQSVSRLQSIVAGLKNAPSDQLINIFESCVRNPVENIMKILKGIGETFCQHYTQSTDEQPGSHIDFAVNRLKLAEILYYKILETVMVQETRRLHGMDMSVLLEQDIFHRSLMACCLEIVLFAYSSPRTFPWIIEVLNLQPFYFYKVIEVVIRSEEGLSRDMVKHLNSIEEQILESLAWSHDSALWEALQVSANKVPTCEEVIFPNNFETGNGGNVQGHLPLMPMSPLMHPRVKEVRTDSGSLRRDMQPLSPISVHERYSSPTAGSAKRRLFGEDPPKEMLMDKIITEGTKLKIAPSSSITAENVSILPGQTLLTMATAPVTGTTGHKVTIPLHGVANDAGEITLIPLSMNTNQESKVKSPVSLTAHSLIGASPKQTNLTKAQEVHSTGINRPKRTGSLALFYRKVYHLASVRLRDLCLKLDVSNELRRKIWTCFEFTLVHCPDLMKDRHLDQLLLCAFYIMAKVTKEERTFQEIMKSYRNQPQANSHVYRSVLLKSIPREVVAYNKNINDDFEMIDCDLEDATKTPDCSSGPVKEERGDLIKFYNTIYVGRVKSFALKYDLANQDHMMDAPPLSPFPHIKQQPGSPRRISQQHSIYISPHKNGSGLTPRSALLYKFNGSPSKSLKDINNMIRQGEQRTKKRVIAIDSDAESPAKRVCQENDDVLLKRLQDVVSERANH</sequence>
<keyword id="KW-0002">3D-structure</keyword>
<keyword id="KW-0025">Alternative splicing</keyword>
<keyword id="KW-0131">Cell cycle</keyword>
<keyword id="KW-0156">Chromatin regulator</keyword>
<keyword id="KW-0903">Direct protein sequencing</keyword>
<keyword id="KW-0945">Host-virus interaction</keyword>
<keyword id="KW-0539">Nucleus</keyword>
<keyword id="KW-0597">Phosphoprotein</keyword>
<keyword id="KW-1267">Proteomics identification</keyword>
<keyword id="KW-1185">Reference proteome</keyword>
<keyword id="KW-0678">Repressor</keyword>
<keyword id="KW-0804">Transcription</keyword>
<keyword id="KW-0805">Transcription regulation</keyword>
<keyword id="KW-0043">Tumor suppressor</keyword>
<organism>
    <name type="scientific">Homo sapiens</name>
    <name type="common">Human</name>
    <dbReference type="NCBI Taxonomy" id="9606"/>
    <lineage>
        <taxon>Eukaryota</taxon>
        <taxon>Metazoa</taxon>
        <taxon>Chordata</taxon>
        <taxon>Craniata</taxon>
        <taxon>Vertebrata</taxon>
        <taxon>Euteleostomi</taxon>
        <taxon>Mammalia</taxon>
        <taxon>Eutheria</taxon>
        <taxon>Euarchontoglires</taxon>
        <taxon>Primates</taxon>
        <taxon>Haplorrhini</taxon>
        <taxon>Catarrhini</taxon>
        <taxon>Hominidae</taxon>
        <taxon>Homo</taxon>
    </lineage>
</organism>
<gene>
    <name type="primary">RBL1</name>
</gene>
<evidence type="ECO:0000250" key="1">
    <source>
        <dbReference type="UniProtKB" id="D3ZS28"/>
    </source>
</evidence>
<evidence type="ECO:0000250" key="2">
    <source>
        <dbReference type="UniProtKB" id="Q64701"/>
    </source>
</evidence>
<evidence type="ECO:0000269" key="3">
    <source>
    </source>
</evidence>
<evidence type="ECO:0000269" key="4">
    <source>
    </source>
</evidence>
<evidence type="ECO:0000269" key="5">
    <source>
    </source>
</evidence>
<evidence type="ECO:0000269" key="6">
    <source>
    </source>
</evidence>
<evidence type="ECO:0000269" key="7">
    <source>
    </source>
</evidence>
<evidence type="ECO:0000269" key="8">
    <source>
    </source>
</evidence>
<evidence type="ECO:0000269" key="9">
    <source>
    </source>
</evidence>
<evidence type="ECO:0000269" key="10">
    <source>
    </source>
</evidence>
<evidence type="ECO:0000269" key="11">
    <source>
    </source>
</evidence>
<evidence type="ECO:0000303" key="12">
    <source>
    </source>
</evidence>
<evidence type="ECO:0000305" key="13"/>
<evidence type="ECO:0000305" key="14">
    <source>
    </source>
</evidence>
<evidence type="ECO:0007744" key="15">
    <source>
    </source>
</evidence>
<evidence type="ECO:0007744" key="16">
    <source>
    </source>
</evidence>
<evidence type="ECO:0007829" key="17">
    <source>
        <dbReference type="PDB" id="5TUV"/>
    </source>
</evidence>
<evidence type="ECO:0007829" key="18">
    <source>
        <dbReference type="PDB" id="7SMD"/>
    </source>
</evidence>